<reference key="1">
    <citation type="journal article" date="2005" name="Nature">
        <title>The genome of the social amoeba Dictyostelium discoideum.</title>
        <authorList>
            <person name="Eichinger L."/>
            <person name="Pachebat J.A."/>
            <person name="Gloeckner G."/>
            <person name="Rajandream M.A."/>
            <person name="Sucgang R."/>
            <person name="Berriman M."/>
            <person name="Song J."/>
            <person name="Olsen R."/>
            <person name="Szafranski K."/>
            <person name="Xu Q."/>
            <person name="Tunggal B."/>
            <person name="Kummerfeld S."/>
            <person name="Madera M."/>
            <person name="Konfortov B.A."/>
            <person name="Rivero F."/>
            <person name="Bankier A.T."/>
            <person name="Lehmann R."/>
            <person name="Hamlin N."/>
            <person name="Davies R."/>
            <person name="Gaudet P."/>
            <person name="Fey P."/>
            <person name="Pilcher K."/>
            <person name="Chen G."/>
            <person name="Saunders D."/>
            <person name="Sodergren E.J."/>
            <person name="Davis P."/>
            <person name="Kerhornou A."/>
            <person name="Nie X."/>
            <person name="Hall N."/>
            <person name="Anjard C."/>
            <person name="Hemphill L."/>
            <person name="Bason N."/>
            <person name="Farbrother P."/>
            <person name="Desany B."/>
            <person name="Just E."/>
            <person name="Morio T."/>
            <person name="Rost R."/>
            <person name="Churcher C.M."/>
            <person name="Cooper J."/>
            <person name="Haydock S."/>
            <person name="van Driessche N."/>
            <person name="Cronin A."/>
            <person name="Goodhead I."/>
            <person name="Muzny D.M."/>
            <person name="Mourier T."/>
            <person name="Pain A."/>
            <person name="Lu M."/>
            <person name="Harper D."/>
            <person name="Lindsay R."/>
            <person name="Hauser H."/>
            <person name="James K.D."/>
            <person name="Quiles M."/>
            <person name="Madan Babu M."/>
            <person name="Saito T."/>
            <person name="Buchrieser C."/>
            <person name="Wardroper A."/>
            <person name="Felder M."/>
            <person name="Thangavelu M."/>
            <person name="Johnson D."/>
            <person name="Knights A."/>
            <person name="Loulseged H."/>
            <person name="Mungall K.L."/>
            <person name="Oliver K."/>
            <person name="Price C."/>
            <person name="Quail M.A."/>
            <person name="Urushihara H."/>
            <person name="Hernandez J."/>
            <person name="Rabbinowitsch E."/>
            <person name="Steffen D."/>
            <person name="Sanders M."/>
            <person name="Ma J."/>
            <person name="Kohara Y."/>
            <person name="Sharp S."/>
            <person name="Simmonds M.N."/>
            <person name="Spiegler S."/>
            <person name="Tivey A."/>
            <person name="Sugano S."/>
            <person name="White B."/>
            <person name="Walker D."/>
            <person name="Woodward J.R."/>
            <person name="Winckler T."/>
            <person name="Tanaka Y."/>
            <person name="Shaulsky G."/>
            <person name="Schleicher M."/>
            <person name="Weinstock G.M."/>
            <person name="Rosenthal A."/>
            <person name="Cox E.C."/>
            <person name="Chisholm R.L."/>
            <person name="Gibbs R.A."/>
            <person name="Loomis W.F."/>
            <person name="Platzer M."/>
            <person name="Kay R.R."/>
            <person name="Williams J.G."/>
            <person name="Dear P.H."/>
            <person name="Noegel A.A."/>
            <person name="Barrell B.G."/>
            <person name="Kuspa A."/>
        </authorList>
    </citation>
    <scope>NUCLEOTIDE SEQUENCE [LARGE SCALE GENOMIC DNA]</scope>
    <source>
        <strain>AX4</strain>
    </source>
</reference>
<reference key="2">
    <citation type="journal article" date="2004" name="Nucleic Acids Res.">
        <title>Domainal organization of the lower eukaryotic homologs of the yeast RNA polymerase II core subunit Rpb7 reflects functional conservation.</title>
        <authorList>
            <person name="Singh S.R."/>
            <person name="Rekha N."/>
            <person name="Pillai B."/>
            <person name="Singh V."/>
            <person name="Naorem A."/>
            <person name="Sampath V."/>
            <person name="Srinivasan N."/>
            <person name="Sadhale P.P."/>
        </authorList>
    </citation>
    <scope>IDENTIFICATION</scope>
</reference>
<evidence type="ECO:0000250" key="1"/>
<evidence type="ECO:0000305" key="2"/>
<sequence>MFFHLTLEKDLHMHPKHCGPNLFTIATQQLYSEVEGTCTGRYGFIITITSVDFLSKGKVLESSGYVVFNVKYKAIIFKPFKGEVLDAIVTKVTNLGFFAEAGPLSIFVSTQLIPSDMIFDAQSAVPCFVSEDGSSKISKDDEVRLQIKGTRVDATEIFAIGSIREDYLGVIG</sequence>
<keyword id="KW-0240">DNA-directed RNA polymerase</keyword>
<keyword id="KW-0539">Nucleus</keyword>
<keyword id="KW-1185">Reference proteome</keyword>
<keyword id="KW-0804">Transcription</keyword>
<comment type="function">
    <text evidence="1">DNA-dependent RNA polymerase catalyzes the transcription of DNA into RNA using the four ribonucleoside triphosphates as substrates. Component of RNA polymerase II which synthesizes mRNA precursors and many functional non-coding RNAs. Pol II is the central component of the basal RNA polymerase II transcription machinery. It is composed of mobile elements that move relative to each other. RPB7 is part of a subcomplex with RPB4 that binds to a pocket formed by RPB1, RPB2 and RPB6 at the base of the clamp element. The RPB4-RPB7 subcomplex seems to lock the clamp via RPB7 in the closed conformation thus preventing double-stranded DNA to enter the active site cleft. The RPB4-RPB7 subcomplex binds single-stranded DNA and RNA (By similarity).</text>
</comment>
<comment type="subunit">
    <text evidence="1">Component of the RNA polymerase II (Pol II) complex consisting of 12 subunits. RPB4 and RPB7 form a subcomplex that protrudes from the 10-subunit Pol II core complex (By similarity).</text>
</comment>
<comment type="subcellular location">
    <subcellularLocation>
        <location evidence="1">Nucleus</location>
    </subcellularLocation>
</comment>
<comment type="similarity">
    <text evidence="2">Belongs to the eukaryotic RPB7/RPC8 RNA polymerase subunit family.</text>
</comment>
<dbReference type="EMBL" id="AAFI02000073">
    <property type="protein sequence ID" value="EAL64909.1"/>
    <property type="molecule type" value="Genomic_DNA"/>
</dbReference>
<dbReference type="RefSeq" id="XP_639913.1">
    <property type="nucleotide sequence ID" value="XM_634821.1"/>
</dbReference>
<dbReference type="SMR" id="Q54P04"/>
<dbReference type="FunCoup" id="Q54P04">
    <property type="interactions" value="694"/>
</dbReference>
<dbReference type="STRING" id="44689.Q54P04"/>
<dbReference type="PaxDb" id="44689-DDB0216295"/>
<dbReference type="EnsemblProtists" id="EAL64909">
    <property type="protein sequence ID" value="EAL64909"/>
    <property type="gene ID" value="DDB_G0284891"/>
</dbReference>
<dbReference type="GeneID" id="8624825"/>
<dbReference type="KEGG" id="ddi:DDB_G0284891"/>
<dbReference type="dictyBase" id="DDB_G0284891">
    <property type="gene designation" value="rpb7"/>
</dbReference>
<dbReference type="VEuPathDB" id="AmoebaDB:DDB_G0284891"/>
<dbReference type="eggNOG" id="KOG3298">
    <property type="taxonomic scope" value="Eukaryota"/>
</dbReference>
<dbReference type="HOGENOM" id="CLU_085878_2_0_1"/>
<dbReference type="InParanoid" id="Q54P04"/>
<dbReference type="OMA" id="TMRQPGL"/>
<dbReference type="PhylomeDB" id="Q54P04"/>
<dbReference type="Reactome" id="R-DDI-113418">
    <property type="pathway name" value="Formation of the Early Elongation Complex"/>
</dbReference>
<dbReference type="Reactome" id="R-DDI-674695">
    <property type="pathway name" value="RNA Polymerase II Pre-transcription Events"/>
</dbReference>
<dbReference type="Reactome" id="R-DDI-6781823">
    <property type="pathway name" value="Formation of TC-NER Pre-Incision Complex"/>
</dbReference>
<dbReference type="Reactome" id="R-DDI-6782135">
    <property type="pathway name" value="Dual incision in TC-NER"/>
</dbReference>
<dbReference type="Reactome" id="R-DDI-6782210">
    <property type="pathway name" value="Gap-filling DNA repair synthesis and ligation in TC-NER"/>
</dbReference>
<dbReference type="Reactome" id="R-DDI-6796648">
    <property type="pathway name" value="TP53 Regulates Transcription of DNA Repair Genes"/>
</dbReference>
<dbReference type="Reactome" id="R-DDI-6807505">
    <property type="pathway name" value="RNA polymerase II transcribes snRNA genes"/>
</dbReference>
<dbReference type="Reactome" id="R-DDI-72086">
    <property type="pathway name" value="mRNA Capping"/>
</dbReference>
<dbReference type="Reactome" id="R-DDI-72163">
    <property type="pathway name" value="mRNA Splicing - Major Pathway"/>
</dbReference>
<dbReference type="Reactome" id="R-DDI-72203">
    <property type="pathway name" value="Processing of Capped Intron-Containing Pre-mRNA"/>
</dbReference>
<dbReference type="Reactome" id="R-DDI-73776">
    <property type="pathway name" value="RNA Polymerase II Promoter Escape"/>
</dbReference>
<dbReference type="Reactome" id="R-DDI-73779">
    <property type="pathway name" value="RNA Polymerase II Transcription Pre-Initiation And Promoter Opening"/>
</dbReference>
<dbReference type="Reactome" id="R-DDI-75953">
    <property type="pathway name" value="RNA Polymerase II Transcription Initiation"/>
</dbReference>
<dbReference type="Reactome" id="R-DDI-76042">
    <property type="pathway name" value="RNA Polymerase II Transcription Initiation And Promoter Clearance"/>
</dbReference>
<dbReference type="Reactome" id="R-DDI-77075">
    <property type="pathway name" value="RNA Pol II CTD phosphorylation and interaction with CE"/>
</dbReference>
<dbReference type="Reactome" id="R-DDI-9018519">
    <property type="pathway name" value="Estrogen-dependent gene expression"/>
</dbReference>
<dbReference type="PRO" id="PR:Q54P04"/>
<dbReference type="Proteomes" id="UP000002195">
    <property type="component" value="Chromosome 4"/>
</dbReference>
<dbReference type="GO" id="GO:0000932">
    <property type="term" value="C:P-body"/>
    <property type="evidence" value="ECO:0000318"/>
    <property type="project" value="GO_Central"/>
</dbReference>
<dbReference type="GO" id="GO:0005665">
    <property type="term" value="C:RNA polymerase II, core complex"/>
    <property type="evidence" value="ECO:0000318"/>
    <property type="project" value="GO_Central"/>
</dbReference>
<dbReference type="GO" id="GO:0016591">
    <property type="term" value="C:RNA polymerase II, holoenzyme"/>
    <property type="evidence" value="ECO:0000250"/>
    <property type="project" value="dictyBase"/>
</dbReference>
<dbReference type="GO" id="GO:0003899">
    <property type="term" value="F:DNA-directed RNA polymerase activity"/>
    <property type="evidence" value="ECO:0000316"/>
    <property type="project" value="dictyBase"/>
</dbReference>
<dbReference type="GO" id="GO:0003697">
    <property type="term" value="F:single-stranded DNA binding"/>
    <property type="evidence" value="ECO:0000250"/>
    <property type="project" value="dictyBase"/>
</dbReference>
<dbReference type="GO" id="GO:0003727">
    <property type="term" value="F:single-stranded RNA binding"/>
    <property type="evidence" value="ECO:0000318"/>
    <property type="project" value="GO_Central"/>
</dbReference>
<dbReference type="GO" id="GO:0031369">
    <property type="term" value="F:translation initiation factor binding"/>
    <property type="evidence" value="ECO:0000318"/>
    <property type="project" value="GO_Central"/>
</dbReference>
<dbReference type="GO" id="GO:0000956">
    <property type="term" value="P:nuclear-transcribed mRNA catabolic process"/>
    <property type="evidence" value="ECO:0000318"/>
    <property type="project" value="GO_Central"/>
</dbReference>
<dbReference type="GO" id="GO:0060213">
    <property type="term" value="P:positive regulation of nuclear-transcribed mRNA poly(A) tail shortening"/>
    <property type="evidence" value="ECO:0000318"/>
    <property type="project" value="GO_Central"/>
</dbReference>
<dbReference type="GO" id="GO:0045948">
    <property type="term" value="P:positive regulation of translational initiation"/>
    <property type="evidence" value="ECO:0000318"/>
    <property type="project" value="GO_Central"/>
</dbReference>
<dbReference type="GO" id="GO:0006366">
    <property type="term" value="P:transcription by RNA polymerase II"/>
    <property type="evidence" value="ECO:0000316"/>
    <property type="project" value="dictyBase"/>
</dbReference>
<dbReference type="GO" id="GO:0006367">
    <property type="term" value="P:transcription initiation at RNA polymerase II promoter"/>
    <property type="evidence" value="ECO:0000318"/>
    <property type="project" value="GO_Central"/>
</dbReference>
<dbReference type="CDD" id="cd04329">
    <property type="entry name" value="RNAP_II_Rpb7_N"/>
    <property type="match status" value="1"/>
</dbReference>
<dbReference type="CDD" id="cd04462">
    <property type="entry name" value="S1_RNAPII_Rpb7"/>
    <property type="match status" value="1"/>
</dbReference>
<dbReference type="FunFam" id="2.40.50.140:FF:000043">
    <property type="entry name" value="DNA-directed RNA polymerase II subunit RPB7"/>
    <property type="match status" value="1"/>
</dbReference>
<dbReference type="FunFam" id="3.30.1490.120:FF:000001">
    <property type="entry name" value="DNA-directed RNA polymerase II subunit RPB7"/>
    <property type="match status" value="1"/>
</dbReference>
<dbReference type="Gene3D" id="2.40.50.140">
    <property type="entry name" value="Nucleic acid-binding proteins"/>
    <property type="match status" value="1"/>
</dbReference>
<dbReference type="Gene3D" id="3.30.1490.120">
    <property type="entry name" value="RNA polymerase Rpb7-like, N-terminal domain"/>
    <property type="match status" value="1"/>
</dbReference>
<dbReference type="InterPro" id="IPR012340">
    <property type="entry name" value="NA-bd_OB-fold"/>
</dbReference>
<dbReference type="InterPro" id="IPR036898">
    <property type="entry name" value="RNA_pol_Rpb7-like_N_sf"/>
</dbReference>
<dbReference type="InterPro" id="IPR045113">
    <property type="entry name" value="Rpb7-like"/>
</dbReference>
<dbReference type="InterPro" id="IPR005576">
    <property type="entry name" value="Rpb7-like_N"/>
</dbReference>
<dbReference type="InterPro" id="IPR003029">
    <property type="entry name" value="S1_domain"/>
</dbReference>
<dbReference type="PANTHER" id="PTHR12709:SF4">
    <property type="entry name" value="DNA-DIRECTED RNA POLYMERASE II SUBUNIT RPB7"/>
    <property type="match status" value="1"/>
</dbReference>
<dbReference type="PANTHER" id="PTHR12709">
    <property type="entry name" value="DNA-DIRECTED RNA POLYMERASE II, III"/>
    <property type="match status" value="1"/>
</dbReference>
<dbReference type="Pfam" id="PF00575">
    <property type="entry name" value="S1"/>
    <property type="match status" value="1"/>
</dbReference>
<dbReference type="Pfam" id="PF03876">
    <property type="entry name" value="SHS2_Rpb7-N"/>
    <property type="match status" value="1"/>
</dbReference>
<dbReference type="SUPFAM" id="SSF88798">
    <property type="entry name" value="N-terminal, heterodimerisation domain of RBP7 (RpoE)"/>
    <property type="match status" value="1"/>
</dbReference>
<dbReference type="SUPFAM" id="SSF50249">
    <property type="entry name" value="Nucleic acid-binding proteins"/>
    <property type="match status" value="1"/>
</dbReference>
<accession>Q54P04</accession>
<gene>
    <name type="primary">polr2g</name>
    <name type="synonym">rpb7</name>
    <name type="ORF">DDB_G0284891</name>
</gene>
<organism>
    <name type="scientific">Dictyostelium discoideum</name>
    <name type="common">Social amoeba</name>
    <dbReference type="NCBI Taxonomy" id="44689"/>
    <lineage>
        <taxon>Eukaryota</taxon>
        <taxon>Amoebozoa</taxon>
        <taxon>Evosea</taxon>
        <taxon>Eumycetozoa</taxon>
        <taxon>Dictyostelia</taxon>
        <taxon>Dictyosteliales</taxon>
        <taxon>Dictyosteliaceae</taxon>
        <taxon>Dictyostelium</taxon>
    </lineage>
</organism>
<feature type="chain" id="PRO_0000327482" description="DNA-directed RNA polymerase II subunit rpb7">
    <location>
        <begin position="1"/>
        <end position="172"/>
    </location>
</feature>
<proteinExistence type="inferred from homology"/>
<protein>
    <recommendedName>
        <fullName>DNA-directed RNA polymerase II subunit rpb7</fullName>
        <shortName>RNA polymerase II subunit B7</shortName>
    </recommendedName>
</protein>
<name>RPB7_DICDI</name>